<organism>
    <name type="scientific">Bacillus cytotoxicus (strain DSM 22905 / CIP 110041 / 391-98 / NVH 391-98)</name>
    <dbReference type="NCBI Taxonomy" id="315749"/>
    <lineage>
        <taxon>Bacteria</taxon>
        <taxon>Bacillati</taxon>
        <taxon>Bacillota</taxon>
        <taxon>Bacilli</taxon>
        <taxon>Bacillales</taxon>
        <taxon>Bacillaceae</taxon>
        <taxon>Bacillus</taxon>
        <taxon>Bacillus cereus group</taxon>
    </lineage>
</organism>
<reference key="1">
    <citation type="journal article" date="2008" name="Chem. Biol. Interact.">
        <title>Extending the Bacillus cereus group genomics to putative food-borne pathogens of different toxicity.</title>
        <authorList>
            <person name="Lapidus A."/>
            <person name="Goltsman E."/>
            <person name="Auger S."/>
            <person name="Galleron N."/>
            <person name="Segurens B."/>
            <person name="Dossat C."/>
            <person name="Land M.L."/>
            <person name="Broussolle V."/>
            <person name="Brillard J."/>
            <person name="Guinebretiere M.-H."/>
            <person name="Sanchis V."/>
            <person name="Nguen-the C."/>
            <person name="Lereclus D."/>
            <person name="Richardson P."/>
            <person name="Wincker P."/>
            <person name="Weissenbach J."/>
            <person name="Ehrlich S.D."/>
            <person name="Sorokin A."/>
        </authorList>
    </citation>
    <scope>NUCLEOTIDE SEQUENCE [LARGE SCALE GENOMIC DNA]</scope>
    <source>
        <strain>DSM 22905 / CIP 110041 / 391-98 / NVH 391-98</strain>
    </source>
</reference>
<dbReference type="EC" id="2.7.1.30" evidence="1"/>
<dbReference type="EMBL" id="CP000764">
    <property type="protein sequence ID" value="ABS21145.1"/>
    <property type="molecule type" value="Genomic_DNA"/>
</dbReference>
<dbReference type="RefSeq" id="WP_011983899.1">
    <property type="nucleotide sequence ID" value="NC_009674.1"/>
</dbReference>
<dbReference type="SMR" id="A7GLY7"/>
<dbReference type="STRING" id="315749.Bcer98_0807"/>
<dbReference type="GeneID" id="33896173"/>
<dbReference type="KEGG" id="bcy:Bcer98_0807"/>
<dbReference type="eggNOG" id="COG0554">
    <property type="taxonomic scope" value="Bacteria"/>
</dbReference>
<dbReference type="HOGENOM" id="CLU_009281_2_3_9"/>
<dbReference type="OrthoDB" id="9805576at2"/>
<dbReference type="UniPathway" id="UPA00618">
    <property type="reaction ID" value="UER00672"/>
</dbReference>
<dbReference type="Proteomes" id="UP000002300">
    <property type="component" value="Chromosome"/>
</dbReference>
<dbReference type="GO" id="GO:0005829">
    <property type="term" value="C:cytosol"/>
    <property type="evidence" value="ECO:0007669"/>
    <property type="project" value="TreeGrafter"/>
</dbReference>
<dbReference type="GO" id="GO:0005524">
    <property type="term" value="F:ATP binding"/>
    <property type="evidence" value="ECO:0007669"/>
    <property type="project" value="UniProtKB-UniRule"/>
</dbReference>
<dbReference type="GO" id="GO:0004370">
    <property type="term" value="F:glycerol kinase activity"/>
    <property type="evidence" value="ECO:0000250"/>
    <property type="project" value="UniProtKB"/>
</dbReference>
<dbReference type="GO" id="GO:0019563">
    <property type="term" value="P:glycerol catabolic process"/>
    <property type="evidence" value="ECO:0007669"/>
    <property type="project" value="UniProtKB-UniRule"/>
</dbReference>
<dbReference type="GO" id="GO:0006071">
    <property type="term" value="P:glycerol metabolic process"/>
    <property type="evidence" value="ECO:0000250"/>
    <property type="project" value="UniProtKB"/>
</dbReference>
<dbReference type="GO" id="GO:0006072">
    <property type="term" value="P:glycerol-3-phosphate metabolic process"/>
    <property type="evidence" value="ECO:0007669"/>
    <property type="project" value="InterPro"/>
</dbReference>
<dbReference type="CDD" id="cd07786">
    <property type="entry name" value="FGGY_EcGK_like"/>
    <property type="match status" value="1"/>
</dbReference>
<dbReference type="FunFam" id="3.30.420.40:FF:000007">
    <property type="entry name" value="Glycerol kinase"/>
    <property type="match status" value="1"/>
</dbReference>
<dbReference type="FunFam" id="3.30.420.40:FF:000008">
    <property type="entry name" value="Glycerol kinase"/>
    <property type="match status" value="1"/>
</dbReference>
<dbReference type="Gene3D" id="3.30.420.40">
    <property type="match status" value="2"/>
</dbReference>
<dbReference type="HAMAP" id="MF_00186">
    <property type="entry name" value="Glycerol_kin"/>
    <property type="match status" value="1"/>
</dbReference>
<dbReference type="InterPro" id="IPR043129">
    <property type="entry name" value="ATPase_NBD"/>
</dbReference>
<dbReference type="InterPro" id="IPR000577">
    <property type="entry name" value="Carb_kinase_FGGY"/>
</dbReference>
<dbReference type="InterPro" id="IPR018483">
    <property type="entry name" value="Carb_kinase_FGGY_CS"/>
</dbReference>
<dbReference type="InterPro" id="IPR018485">
    <property type="entry name" value="FGGY_C"/>
</dbReference>
<dbReference type="InterPro" id="IPR018484">
    <property type="entry name" value="FGGY_N"/>
</dbReference>
<dbReference type="InterPro" id="IPR005999">
    <property type="entry name" value="Glycerol_kin"/>
</dbReference>
<dbReference type="NCBIfam" id="TIGR01311">
    <property type="entry name" value="glycerol_kin"/>
    <property type="match status" value="1"/>
</dbReference>
<dbReference type="NCBIfam" id="NF000756">
    <property type="entry name" value="PRK00047.1"/>
    <property type="match status" value="1"/>
</dbReference>
<dbReference type="PANTHER" id="PTHR10196:SF69">
    <property type="entry name" value="GLYCEROL KINASE"/>
    <property type="match status" value="1"/>
</dbReference>
<dbReference type="PANTHER" id="PTHR10196">
    <property type="entry name" value="SUGAR KINASE"/>
    <property type="match status" value="1"/>
</dbReference>
<dbReference type="Pfam" id="PF02782">
    <property type="entry name" value="FGGY_C"/>
    <property type="match status" value="1"/>
</dbReference>
<dbReference type="Pfam" id="PF00370">
    <property type="entry name" value="FGGY_N"/>
    <property type="match status" value="1"/>
</dbReference>
<dbReference type="PIRSF" id="PIRSF000538">
    <property type="entry name" value="GlpK"/>
    <property type="match status" value="1"/>
</dbReference>
<dbReference type="SUPFAM" id="SSF53067">
    <property type="entry name" value="Actin-like ATPase domain"/>
    <property type="match status" value="2"/>
</dbReference>
<dbReference type="PROSITE" id="PS00933">
    <property type="entry name" value="FGGY_KINASES_1"/>
    <property type="match status" value="1"/>
</dbReference>
<dbReference type="PROSITE" id="PS00445">
    <property type="entry name" value="FGGY_KINASES_2"/>
    <property type="match status" value="1"/>
</dbReference>
<feature type="chain" id="PRO_1000077409" description="Glycerol kinase">
    <location>
        <begin position="1"/>
        <end position="496"/>
    </location>
</feature>
<feature type="binding site" evidence="1">
    <location>
        <position position="12"/>
    </location>
    <ligand>
        <name>ADP</name>
        <dbReference type="ChEBI" id="CHEBI:456216"/>
    </ligand>
</feature>
<feature type="binding site" evidence="1">
    <location>
        <position position="12"/>
    </location>
    <ligand>
        <name>ATP</name>
        <dbReference type="ChEBI" id="CHEBI:30616"/>
    </ligand>
</feature>
<feature type="binding site" evidence="1">
    <location>
        <position position="12"/>
    </location>
    <ligand>
        <name>sn-glycerol 3-phosphate</name>
        <dbReference type="ChEBI" id="CHEBI:57597"/>
    </ligand>
</feature>
<feature type="binding site" evidence="1">
    <location>
        <position position="13"/>
    </location>
    <ligand>
        <name>ATP</name>
        <dbReference type="ChEBI" id="CHEBI:30616"/>
    </ligand>
</feature>
<feature type="binding site" evidence="1">
    <location>
        <position position="14"/>
    </location>
    <ligand>
        <name>ATP</name>
        <dbReference type="ChEBI" id="CHEBI:30616"/>
    </ligand>
</feature>
<feature type="binding site" evidence="1">
    <location>
        <position position="16"/>
    </location>
    <ligand>
        <name>ADP</name>
        <dbReference type="ChEBI" id="CHEBI:456216"/>
    </ligand>
</feature>
<feature type="binding site" evidence="1">
    <location>
        <position position="82"/>
    </location>
    <ligand>
        <name>glycerol</name>
        <dbReference type="ChEBI" id="CHEBI:17754"/>
    </ligand>
</feature>
<feature type="binding site" evidence="1">
    <location>
        <position position="82"/>
    </location>
    <ligand>
        <name>sn-glycerol 3-phosphate</name>
        <dbReference type="ChEBI" id="CHEBI:57597"/>
    </ligand>
</feature>
<feature type="binding site" evidence="1">
    <location>
        <position position="83"/>
    </location>
    <ligand>
        <name>glycerol</name>
        <dbReference type="ChEBI" id="CHEBI:17754"/>
    </ligand>
</feature>
<feature type="binding site" evidence="1">
    <location>
        <position position="83"/>
    </location>
    <ligand>
        <name>sn-glycerol 3-phosphate</name>
        <dbReference type="ChEBI" id="CHEBI:57597"/>
    </ligand>
</feature>
<feature type="binding site" evidence="1">
    <location>
        <position position="134"/>
    </location>
    <ligand>
        <name>glycerol</name>
        <dbReference type="ChEBI" id="CHEBI:17754"/>
    </ligand>
</feature>
<feature type="binding site" evidence="1">
    <location>
        <position position="134"/>
    </location>
    <ligand>
        <name>sn-glycerol 3-phosphate</name>
        <dbReference type="ChEBI" id="CHEBI:57597"/>
    </ligand>
</feature>
<feature type="binding site" evidence="1">
    <location>
        <position position="244"/>
    </location>
    <ligand>
        <name>glycerol</name>
        <dbReference type="ChEBI" id="CHEBI:17754"/>
    </ligand>
</feature>
<feature type="binding site" evidence="1">
    <location>
        <position position="244"/>
    </location>
    <ligand>
        <name>sn-glycerol 3-phosphate</name>
        <dbReference type="ChEBI" id="CHEBI:57597"/>
    </ligand>
</feature>
<feature type="binding site" evidence="1">
    <location>
        <position position="245"/>
    </location>
    <ligand>
        <name>glycerol</name>
        <dbReference type="ChEBI" id="CHEBI:17754"/>
    </ligand>
</feature>
<feature type="binding site" evidence="1">
    <location>
        <position position="266"/>
    </location>
    <ligand>
        <name>ADP</name>
        <dbReference type="ChEBI" id="CHEBI:456216"/>
    </ligand>
</feature>
<feature type="binding site" evidence="1">
    <location>
        <position position="266"/>
    </location>
    <ligand>
        <name>ATP</name>
        <dbReference type="ChEBI" id="CHEBI:30616"/>
    </ligand>
</feature>
<feature type="binding site" evidence="1">
    <location>
        <position position="309"/>
    </location>
    <ligand>
        <name>ADP</name>
        <dbReference type="ChEBI" id="CHEBI:456216"/>
    </ligand>
</feature>
<feature type="binding site" evidence="1">
    <location>
        <position position="309"/>
    </location>
    <ligand>
        <name>ATP</name>
        <dbReference type="ChEBI" id="CHEBI:30616"/>
    </ligand>
</feature>
<feature type="binding site" evidence="1">
    <location>
        <position position="313"/>
    </location>
    <ligand>
        <name>ATP</name>
        <dbReference type="ChEBI" id="CHEBI:30616"/>
    </ligand>
</feature>
<feature type="binding site" evidence="1">
    <location>
        <position position="410"/>
    </location>
    <ligand>
        <name>ADP</name>
        <dbReference type="ChEBI" id="CHEBI:456216"/>
    </ligand>
</feature>
<feature type="binding site" evidence="1">
    <location>
        <position position="410"/>
    </location>
    <ligand>
        <name>ATP</name>
        <dbReference type="ChEBI" id="CHEBI:30616"/>
    </ligand>
</feature>
<feature type="binding site" evidence="1">
    <location>
        <position position="414"/>
    </location>
    <ligand>
        <name>ADP</name>
        <dbReference type="ChEBI" id="CHEBI:456216"/>
    </ligand>
</feature>
<feature type="modified residue" description="Phosphohistidine; by HPr" evidence="1">
    <location>
        <position position="230"/>
    </location>
</feature>
<gene>
    <name evidence="1" type="primary">glpK</name>
    <name type="ordered locus">Bcer98_0807</name>
</gene>
<proteinExistence type="inferred from homology"/>
<name>GLPK_BACCN</name>
<keyword id="KW-0067">ATP-binding</keyword>
<keyword id="KW-0319">Glycerol metabolism</keyword>
<keyword id="KW-0418">Kinase</keyword>
<keyword id="KW-0547">Nucleotide-binding</keyword>
<keyword id="KW-0597">Phosphoprotein</keyword>
<keyword id="KW-0808">Transferase</keyword>
<accession>A7GLY7</accession>
<comment type="function">
    <text evidence="1">Key enzyme in the regulation of glycerol uptake and metabolism. Catalyzes the phosphorylation of glycerol to yield sn-glycerol 3-phosphate.</text>
</comment>
<comment type="catalytic activity">
    <reaction evidence="1">
        <text>glycerol + ATP = sn-glycerol 3-phosphate + ADP + H(+)</text>
        <dbReference type="Rhea" id="RHEA:21644"/>
        <dbReference type="ChEBI" id="CHEBI:15378"/>
        <dbReference type="ChEBI" id="CHEBI:17754"/>
        <dbReference type="ChEBI" id="CHEBI:30616"/>
        <dbReference type="ChEBI" id="CHEBI:57597"/>
        <dbReference type="ChEBI" id="CHEBI:456216"/>
        <dbReference type="EC" id="2.7.1.30"/>
    </reaction>
</comment>
<comment type="activity regulation">
    <text evidence="1">Activated by phosphorylation and inhibited by fructose 1,6-bisphosphate (FBP).</text>
</comment>
<comment type="pathway">
    <text evidence="1">Polyol metabolism; glycerol degradation via glycerol kinase pathway; sn-glycerol 3-phosphate from glycerol: step 1/1.</text>
</comment>
<comment type="subunit">
    <text evidence="1">Homotetramer and homodimer (in equilibrium).</text>
</comment>
<comment type="PTM">
    <text evidence="1">The phosphoenolpyruvate-dependent sugar phosphotransferase system (PTS), including enzyme I, and histidine-containing protein (HPr) are required for the phosphorylation, which leads to the activation of the enzyme.</text>
</comment>
<comment type="similarity">
    <text evidence="1">Belongs to the FGGY kinase family.</text>
</comment>
<evidence type="ECO:0000255" key="1">
    <source>
        <dbReference type="HAMAP-Rule" id="MF_00186"/>
    </source>
</evidence>
<protein>
    <recommendedName>
        <fullName evidence="1">Glycerol kinase</fullName>
        <ecNumber evidence="1">2.7.1.30</ecNumber>
    </recommendedName>
    <alternativeName>
        <fullName evidence="1">ATP:glycerol 3-phosphotransferase</fullName>
    </alternativeName>
    <alternativeName>
        <fullName evidence="1">Glycerokinase</fullName>
        <shortName evidence="1">GK</shortName>
    </alternativeName>
</protein>
<sequence>METYILSLDQGTTSSRAILFNKKGEIVHSAQKEFTQYFPKPGWVEHNAQEIWGSILAVIATCLSEADVKPEQIAGIGITNQRETAVVWEKATGKPVYNAIVWQSRQTAEICEELKEKGYGDMVREKTGLLIDAYFSGTKVKWILDNVEGAREKAERGELLFGTIDTWLVWKLSGGKAHVTDYSNASRTLMFNIHDLKWDDELLEILTVPKSMLPEVRPSSEVYGHTVDYHFFSQNVPIAGVAGDQQAALFGQACFSEGMAKNTYGTGCFMLMNTGETAVNSNHGLLTTIAWGLNGKVNYALEGSIFVAGSAIQWLRDGMRMVNDASESEEYASRVESTDGVYVVPAFVGLGTPYWDSEVRGAVFGVTRGTTKEHFIRATLESLGYQTRDVLCAMEADSGIELKTLRVDGGAVKNNFLMQFQSDMLQVPVERPMISETTALGAAYLAGLAVGYWESQEEIKAQWDMDRSFTPEMEKERSEELYSGWKKAIEATKAFK</sequence>